<organism>
    <name type="scientific">Trypanoplasma borreli</name>
    <dbReference type="NCBI Taxonomy" id="5710"/>
    <lineage>
        <taxon>Eukaryota</taxon>
        <taxon>Discoba</taxon>
        <taxon>Euglenozoa</taxon>
        <taxon>Kinetoplastea</taxon>
        <taxon>Metakinetoplastina</taxon>
        <taxon>Parabodonida</taxon>
        <taxon>Trypanoplasma</taxon>
    </lineage>
</organism>
<gene>
    <name evidence="1" type="primary">pfk</name>
</gene>
<feature type="chain" id="PRO_0000429722" description="ATP-dependent 6-phosphofructokinase">
    <location>
        <begin position="1"/>
        <end position="490"/>
    </location>
</feature>
<feature type="short sequence motif" description="Peroxisomal targeting signal" evidence="1">
    <location>
        <begin position="488"/>
        <end position="490"/>
    </location>
</feature>
<feature type="active site" description="Proton acceptor" evidence="1">
    <location>
        <position position="231"/>
    </location>
</feature>
<feature type="binding site" evidence="1">
    <location>
        <position position="109"/>
    </location>
    <ligand>
        <name>ATP</name>
        <dbReference type="ChEBI" id="CHEBI:30616"/>
    </ligand>
</feature>
<feature type="binding site" evidence="1">
    <location>
        <begin position="175"/>
        <end position="176"/>
    </location>
    <ligand>
        <name>ATP</name>
        <dbReference type="ChEBI" id="CHEBI:30616"/>
    </ligand>
</feature>
<feature type="binding site" evidence="1">
    <location>
        <begin position="200"/>
        <end position="203"/>
    </location>
    <ligand>
        <name>ATP</name>
        <dbReference type="ChEBI" id="CHEBI:30616"/>
    </ligand>
</feature>
<feature type="binding site" evidence="1">
    <location>
        <position position="201"/>
    </location>
    <ligand>
        <name>Mg(2+)</name>
        <dbReference type="ChEBI" id="CHEBI:18420"/>
        <note>catalytic</note>
    </ligand>
</feature>
<feature type="binding site" evidence="1">
    <location>
        <begin position="229"/>
        <end position="231"/>
    </location>
    <ligand>
        <name>substrate</name>
    </ligand>
</feature>
<feature type="binding site" evidence="1">
    <location>
        <begin position="274"/>
        <end position="276"/>
    </location>
    <ligand>
        <name>substrate</name>
    </ligand>
</feature>
<feature type="binding site" evidence="1">
    <location>
        <position position="327"/>
    </location>
    <ligand>
        <name>substrate</name>
    </ligand>
</feature>
<feature type="binding site" evidence="1">
    <location>
        <begin position="383"/>
        <end position="386"/>
    </location>
    <ligand>
        <name>substrate</name>
    </ligand>
</feature>
<feature type="site" description="Important for substrate specificity; cannot use PPi as phosphoryl donor" evidence="1">
    <location>
        <position position="202"/>
    </location>
</feature>
<sequence length="490" mass="53376">MDEPSNMSTTSSKIPQYDFYSDVDNLHPDQFRIQCLPGRNFISPLVEQKKDFVKAHVIHDKDLDIMYDPMPKGKCNISQSCLTLPLACPRVSLHFDPSKTTVAMVTCGGVCPGLNDVIRGITLAAVCSYHVKKVIGFKYGYWGLSKAGRHTAIELTSNIVRGLRHLGGTFLGTSRGGQNISDMVDTLVEYGVNILFTIGGDGTQKGAVAISEEVNRRGLDIAVFGIPKTIDNDLSFSQRTFGYETAVSEAVIAIRAAHAEAISHEYGVGIVKLMGRNSGFIAASATVASALSHICLIPEKNVSKKVLLSLIEARFMMAKDIVIVVAEGFGQDWPDCNEDLGSDASGNKRLTDIGLVIKKIVQDHLSKNPKYHQSTVKYIDPSYMIRACPASTSDAAFCSNLSTLAVHEAMAGRTACLITLWYSNFVLVPIKTAVSHRKIVSTGGALWRQVREVTVDGSGDIAMVHQQELSRELKAINAHRNSIMEQLSKL</sequence>
<protein>
    <recommendedName>
        <fullName evidence="1">ATP-dependent 6-phosphofructokinase</fullName>
        <shortName evidence="1">ATP-PFK</shortName>
        <shortName evidence="1">Phosphofructokinase</shortName>
        <ecNumber evidence="1">2.7.1.11</ecNumber>
    </recommendedName>
    <alternativeName>
        <fullName evidence="1">Phosphohexokinase</fullName>
    </alternativeName>
</protein>
<proteinExistence type="inferred from homology"/>
<dbReference type="EC" id="2.7.1.11" evidence="1"/>
<dbReference type="EMBL" id="AJ310928">
    <property type="protein sequence ID" value="CAC84571.1"/>
    <property type="molecule type" value="Genomic_DNA"/>
</dbReference>
<dbReference type="SMR" id="Q8WPP2"/>
<dbReference type="UniPathway" id="UPA00109">
    <property type="reaction ID" value="UER00182"/>
</dbReference>
<dbReference type="GO" id="GO:0020015">
    <property type="term" value="C:glycosome"/>
    <property type="evidence" value="ECO:0007669"/>
    <property type="project" value="UniProtKB-SubCell"/>
</dbReference>
<dbReference type="GO" id="GO:0003872">
    <property type="term" value="F:6-phosphofructokinase activity"/>
    <property type="evidence" value="ECO:0007669"/>
    <property type="project" value="UniProtKB-UniRule"/>
</dbReference>
<dbReference type="GO" id="GO:0005524">
    <property type="term" value="F:ATP binding"/>
    <property type="evidence" value="ECO:0007669"/>
    <property type="project" value="UniProtKB-KW"/>
</dbReference>
<dbReference type="GO" id="GO:0046872">
    <property type="term" value="F:metal ion binding"/>
    <property type="evidence" value="ECO:0007669"/>
    <property type="project" value="UniProtKB-KW"/>
</dbReference>
<dbReference type="GO" id="GO:0006002">
    <property type="term" value="P:fructose 6-phosphate metabolic process"/>
    <property type="evidence" value="ECO:0007669"/>
    <property type="project" value="InterPro"/>
</dbReference>
<dbReference type="FunFam" id="3.40.50.450:FF:000002">
    <property type="entry name" value="ATP-dependent 6-phosphofructokinase"/>
    <property type="match status" value="1"/>
</dbReference>
<dbReference type="Gene3D" id="3.40.50.450">
    <property type="match status" value="1"/>
</dbReference>
<dbReference type="HAMAP" id="MF_01981">
    <property type="entry name" value="Phosphofructokinase_II_X"/>
    <property type="match status" value="1"/>
</dbReference>
<dbReference type="InterPro" id="IPR022953">
    <property type="entry name" value="ATP_PFK"/>
</dbReference>
<dbReference type="InterPro" id="IPR050929">
    <property type="entry name" value="PFKA"/>
</dbReference>
<dbReference type="InterPro" id="IPR000023">
    <property type="entry name" value="Phosphofructokinase_dom"/>
</dbReference>
<dbReference type="InterPro" id="IPR035966">
    <property type="entry name" value="PKF_sf"/>
</dbReference>
<dbReference type="InterPro" id="IPR012004">
    <property type="entry name" value="PyroP-dep_PFK_TP0108"/>
</dbReference>
<dbReference type="NCBIfam" id="NF005301">
    <property type="entry name" value="PRK06830.1"/>
    <property type="match status" value="1"/>
</dbReference>
<dbReference type="PANTHER" id="PTHR45770">
    <property type="entry name" value="ATP-DEPENDENT 6-PHOSPHOFRUCTOKINASE 1"/>
    <property type="match status" value="1"/>
</dbReference>
<dbReference type="Pfam" id="PF00365">
    <property type="entry name" value="PFK"/>
    <property type="match status" value="1"/>
</dbReference>
<dbReference type="PRINTS" id="PR00476">
    <property type="entry name" value="PHFRCTKINASE"/>
</dbReference>
<dbReference type="SUPFAM" id="SSF53784">
    <property type="entry name" value="Phosphofructokinase"/>
    <property type="match status" value="1"/>
</dbReference>
<keyword id="KW-0021">Allosteric enzyme</keyword>
<keyword id="KW-0067">ATP-binding</keyword>
<keyword id="KW-0324">Glycolysis</keyword>
<keyword id="KW-0327">Glycosome</keyword>
<keyword id="KW-0418">Kinase</keyword>
<keyword id="KW-0460">Magnesium</keyword>
<keyword id="KW-0479">Metal-binding</keyword>
<keyword id="KW-0547">Nucleotide-binding</keyword>
<keyword id="KW-0576">Peroxisome</keyword>
<keyword id="KW-0808">Transferase</keyword>
<comment type="function">
    <text evidence="1">Catalyzes the phosphorylation of D-fructose 6-phosphate to fructose 1,6-bisphosphate by ATP, the first committing step of glycolysis.</text>
</comment>
<comment type="catalytic activity">
    <reaction evidence="1">
        <text>beta-D-fructose 6-phosphate + ATP = beta-D-fructose 1,6-bisphosphate + ADP + H(+)</text>
        <dbReference type="Rhea" id="RHEA:16109"/>
        <dbReference type="ChEBI" id="CHEBI:15378"/>
        <dbReference type="ChEBI" id="CHEBI:30616"/>
        <dbReference type="ChEBI" id="CHEBI:32966"/>
        <dbReference type="ChEBI" id="CHEBI:57634"/>
        <dbReference type="ChEBI" id="CHEBI:456216"/>
        <dbReference type="EC" id="2.7.1.11"/>
    </reaction>
</comment>
<comment type="cofactor">
    <cofactor evidence="1">
        <name>Mg(2+)</name>
        <dbReference type="ChEBI" id="CHEBI:18420"/>
    </cofactor>
</comment>
<comment type="activity regulation">
    <text evidence="1">Allosterically activated by AMP.</text>
</comment>
<comment type="pathway">
    <text evidence="1">Carbohydrate degradation; glycolysis; D-glyceraldehyde 3-phosphate and glycerone phosphate from D-glucose: step 3/4.</text>
</comment>
<comment type="subunit">
    <text evidence="1">Homotetramer.</text>
</comment>
<comment type="subcellular location">
    <subcellularLocation>
        <location evidence="1">Glycosome</location>
    </subcellularLocation>
</comment>
<comment type="similarity">
    <text evidence="1">Belongs to the phosphofructokinase type A (PFKA) family. PPi-dependent PFK group II subfamily. Atypical ATP-dependent clade 'X' sub-subfamily.</text>
</comment>
<name>PFKA_TRYBO</name>
<accession>Q8WPP2</accession>
<evidence type="ECO:0000255" key="1">
    <source>
        <dbReference type="HAMAP-Rule" id="MF_03186"/>
    </source>
</evidence>
<reference key="1">
    <citation type="journal article" date="2002" name="Eur. J. Biochem.">
        <title>Leishmania donovani phosphofructokinase. Gene characterization, biochemical properties and structure-modeling studies.</title>
        <authorList>
            <person name="Lopez C."/>
            <person name="Chevalier N."/>
            <person name="Hannaert V."/>
            <person name="Rigden D.J."/>
            <person name="Michels P.A."/>
            <person name="Ramirez J.L."/>
        </authorList>
    </citation>
    <scope>NUCLEOTIDE SEQUENCE [GENOMIC DNA]</scope>
</reference>